<dbReference type="EMBL" id="M28267">
    <property type="protein sequence ID" value="AAA98112.1"/>
    <property type="status" value="ALT_TERM"/>
    <property type="molecule type" value="Genomic_RNA"/>
</dbReference>
<dbReference type="PDB" id="1A92">
    <property type="method" value="X-ray"/>
    <property type="resolution" value="1.80 A"/>
    <property type="chains" value="A/B/C/D=12-60"/>
</dbReference>
<dbReference type="PDB" id="1BY0">
    <property type="method" value="NMR"/>
    <property type="chains" value="A=24-50"/>
</dbReference>
<dbReference type="PDBsum" id="1A92"/>
<dbReference type="PDBsum" id="1BY0"/>
<dbReference type="SMR" id="P25989"/>
<dbReference type="EvolutionaryTrace" id="P25989"/>
<dbReference type="Proteomes" id="UP000007708">
    <property type="component" value="Genome"/>
</dbReference>
<dbReference type="GO" id="GO:0043657">
    <property type="term" value="C:host cell"/>
    <property type="evidence" value="ECO:0007669"/>
    <property type="project" value="GOC"/>
</dbReference>
<dbReference type="GO" id="GO:0042025">
    <property type="term" value="C:host cell nucleus"/>
    <property type="evidence" value="ECO:0007669"/>
    <property type="project" value="UniProtKB-SubCell"/>
</dbReference>
<dbReference type="GO" id="GO:0044423">
    <property type="term" value="C:virion component"/>
    <property type="evidence" value="ECO:0007669"/>
    <property type="project" value="UniProtKB-KW"/>
</dbReference>
<dbReference type="GO" id="GO:0003723">
    <property type="term" value="F:RNA binding"/>
    <property type="evidence" value="ECO:0007669"/>
    <property type="project" value="UniProtKB-KW"/>
</dbReference>
<dbReference type="GO" id="GO:0046718">
    <property type="term" value="P:symbiont entry into host cell"/>
    <property type="evidence" value="ECO:0007669"/>
    <property type="project" value="UniProtKB-KW"/>
</dbReference>
<dbReference type="GO" id="GO:0075732">
    <property type="term" value="P:viral penetration into host nucleus"/>
    <property type="evidence" value="ECO:0007669"/>
    <property type="project" value="UniProtKB-KW"/>
</dbReference>
<dbReference type="Gene3D" id="4.10.220.40">
    <property type="entry name" value="Delta antigen, N-terminal"/>
    <property type="match status" value="1"/>
</dbReference>
<dbReference type="InterPro" id="IPR027403">
    <property type="entry name" value="Delta_antigen_N"/>
</dbReference>
<dbReference type="InterPro" id="IPR037517">
    <property type="entry name" value="HDAG_dom"/>
</dbReference>
<dbReference type="InterPro" id="IPR002506">
    <property type="entry name" value="HDV_ag"/>
</dbReference>
<dbReference type="Pfam" id="PF01517">
    <property type="entry name" value="HDV_ag"/>
    <property type="match status" value="1"/>
</dbReference>
<dbReference type="SUPFAM" id="SSF58108">
    <property type="entry name" value="Oligomerization domain of hepatitis delta antigen"/>
    <property type="match status" value="1"/>
</dbReference>
<dbReference type="PROSITE" id="PS51838">
    <property type="entry name" value="HDAG"/>
    <property type="match status" value="1"/>
</dbReference>
<name>SHDAG_HDVAM</name>
<sequence length="195" mass="21962">MSRSERRKDRGGREDILEQWVSGRKKLEELERDLRKLKKKIKKLEEDNPWLGNIKGIIGKKDKDGEGAPPAKKLRMDQMEIDAGPRKRPLRGGFTDKERQDHRRRKALENKRKQLSSGGKSLSREEEEELKRLTEEDEKRERRIAGPSVGGVNPLEGGSRGAPGGGFVPSMQGVPESPFARTGEGLDIRGSQGFP</sequence>
<organismHost>
    <name type="scientific">Homo sapiens</name>
    <name type="common">Human</name>
    <dbReference type="NCBI Taxonomy" id="9606"/>
</organismHost>
<organism>
    <name type="scientific">Hepatitis delta virus genotype I (isolate American)</name>
    <name type="common">HDV</name>
    <dbReference type="NCBI Taxonomy" id="10422"/>
    <lineage>
        <taxon>Viruses</taxon>
        <taxon>Ribozyviria</taxon>
        <taxon>Kolmioviridae</taxon>
        <taxon>Deltavirus</taxon>
        <taxon>Hepatitis delta virus</taxon>
    </lineage>
</organism>
<proteinExistence type="evidence at protein level"/>
<protein>
    <recommendedName>
        <fullName>Small delta antigen</fullName>
        <shortName>S-HDAg</shortName>
    </recommendedName>
    <alternativeName>
        <fullName>p24</fullName>
    </alternativeName>
</protein>
<accession>P25989</accession>
<comment type="function">
    <text evidence="1">Promotes both transcription and replication of genomic RNA. Following virus entry into host cell, provides nuclear import of HDV RNPs thanks to its nuclear localization signal. May interact with host RNA polymerase II thereby changing its template requirement from DNA to RNA. RNA pol II complex would then acts as an RNA-directed RNA polymerase, and transcribe and replicate HDV genome (By similarity).</text>
</comment>
<comment type="subunit">
    <text evidence="1">Homodimer. Homooctamer. Interacts with host RNA polymerase II complex, and with host NPM1.</text>
</comment>
<comment type="subcellular location">
    <subcellularLocation>
        <location>Virion</location>
    </subcellularLocation>
    <subcellularLocation>
        <location evidence="1">Host nucleus</location>
    </subcellularLocation>
</comment>
<comment type="PTM">
    <text evidence="1">Phosphorylated at serines and threonines by host MAPK1/3, PKR, and CK2.</text>
</comment>
<comment type="PTM">
    <text evidence="1">Acetylation modulates nuclear localization. Neo-synthesized genomic RNA migrates from the nucleus to the cytoplasm, where they interact with S-HDAg, which once acetylated redirect both partners to the nucleus (By similarity).</text>
</comment>
<comment type="PTM">
    <text evidence="1">Methylation plays a role in viral genome replication.</text>
</comment>
<comment type="RNA editing">
    <location>
        <position position="196" evidence="1"/>
    </location>
    <text evidence="1">Partially edited. RNA editing at this position occurs on the antigenomic strand and consists of a conversion of A to G catalyzed by the cellular enzyme ADAR1. The unedited RNA version gives rise to the small delta antigen, which ends with a nonsense codon at position 196. In the edited version, this amber codon is modified to a tryptophan codon and gives rise to the large delta antigen protein (AC P0C6L5). S-HDAg suppresses editing of non-replicating antigenomic RNA, thereby regulating the extent of editing (By similarity).</text>
</comment>
<comment type="miscellaneous">
    <text>This strain belongs to the genotype I found in North America, Europe, Africa, East and West Asia and the South Pacific.</text>
</comment>
<comment type="similarity">
    <text evidence="6">Belongs to the hepatitis delta antigen family.</text>
</comment>
<keyword id="KW-0002">3D-structure</keyword>
<keyword id="KW-0007">Acetylation</keyword>
<keyword id="KW-1048">Host nucleus</keyword>
<keyword id="KW-0945">Host-virus interaction</keyword>
<keyword id="KW-0488">Methylation</keyword>
<keyword id="KW-0597">Phosphoprotein</keyword>
<keyword id="KW-0691">RNA editing</keyword>
<keyword id="KW-0694">RNA-binding</keyword>
<keyword id="KW-1163">Viral penetration into host nucleus</keyword>
<keyword id="KW-0946">Virion</keyword>
<keyword id="KW-1160">Virus entry into host cell</keyword>
<reference key="1">
    <citation type="journal article" date="1987" name="Nature">
        <title>Molecular cloning and sequencing of a human hepatitis delta (delta) virus RNA.</title>
        <authorList>
            <person name="Makino S."/>
            <person name="Chang M.F."/>
            <person name="Shieh C.K."/>
            <person name="Kamahora T."/>
            <person name="Vannier D.M."/>
            <person name="Govindarajan S."/>
            <person name="Lai M.M.C."/>
        </authorList>
    </citation>
    <scope>NUCLEOTIDE SEQUENCE [GENOMIC RNA]</scope>
</reference>
<reference key="2">
    <citation type="journal article" date="2005" name="Acta Virol.">
        <title>Hepatitis D.</title>
        <authorList>
            <person name="Husa P."/>
            <person name="Linhartova A."/>
            <person name="Nemecek V."/>
            <person name="Husova L."/>
        </authorList>
    </citation>
    <scope>REVIEW</scope>
</reference>
<reference key="3">
    <citation type="journal article" date="2006" name="Curr. Top. Microbiol. Immunol.">
        <title>Post-translational modification of delta antigen of hepatitis D virus.</title>
        <authorList>
            <person name="Huang W.H."/>
            <person name="Chen C.W."/>
            <person name="Wu H.L."/>
            <person name="Chen P.J."/>
        </authorList>
    </citation>
    <scope>REVIEW</scope>
</reference>
<reference key="4">
    <citation type="journal article" date="1999" name="Proteins">
        <title>Solution structure and RNA-binding activity of the N-terminal leucine-repeat region of hepatitis delta antigen.</title>
        <authorList>
            <person name="Lin I.J."/>
            <person name="Lou Y.C."/>
            <person name="Pai M.T."/>
            <person name="Wu H.N."/>
            <person name="Cheng J.W."/>
        </authorList>
    </citation>
    <scope>STRUCTURE BY NMR OF 24-50</scope>
</reference>
<feature type="chain" id="PRO_0000038129" description="Small delta antigen">
    <location>
        <begin position="1"/>
        <end position="195"/>
    </location>
</feature>
<feature type="domain" description="HDAg" evidence="4">
    <location>
        <begin position="20"/>
        <end position="195"/>
    </location>
</feature>
<feature type="region of interest" description="Dimerization" evidence="3">
    <location>
        <begin position="12"/>
        <end position="60"/>
    </location>
</feature>
<feature type="region of interest" description="Disordered" evidence="5">
    <location>
        <begin position="52"/>
        <end position="195"/>
    </location>
</feature>
<feature type="region of interest" description="RNA-binding" evidence="4">
    <location>
        <begin position="97"/>
        <end position="107"/>
    </location>
</feature>
<feature type="region of interest" description="RNAPII-binding" evidence="4">
    <location>
        <begin position="130"/>
        <end position="195"/>
    </location>
</feature>
<feature type="region of interest" description="RNA-binding" evidence="4">
    <location>
        <begin position="136"/>
        <end position="146"/>
    </location>
</feature>
<feature type="short sequence motif" description="Nuclear localization signal" evidence="2">
    <location>
        <begin position="66"/>
        <end position="75"/>
    </location>
</feature>
<feature type="compositionally biased region" description="Basic and acidic residues" evidence="5">
    <location>
        <begin position="94"/>
        <end position="112"/>
    </location>
</feature>
<feature type="compositionally biased region" description="Basic and acidic residues" evidence="5">
    <location>
        <begin position="129"/>
        <end position="144"/>
    </location>
</feature>
<feature type="compositionally biased region" description="Gly residues" evidence="5">
    <location>
        <begin position="158"/>
        <end position="167"/>
    </location>
</feature>
<feature type="modified residue" description="Phosphoserine; by host CK2" evidence="2">
    <location>
        <position position="2"/>
    </location>
</feature>
<feature type="modified residue" description="Omega-N-methylated arginine; by host PRMT1" evidence="2">
    <location>
        <position position="13"/>
    </location>
</feature>
<feature type="modified residue" description="N6-acetyllysine; by host" evidence="2">
    <location>
        <position position="72"/>
    </location>
</feature>
<feature type="modified residue" description="Phosphoserine; by host" evidence="2">
    <location>
        <position position="123"/>
    </location>
</feature>
<feature type="modified residue" description="Phosphoserine; by host MAPK1 and MAPK3" evidence="2">
    <location>
        <position position="177"/>
    </location>
</feature>
<feature type="modified residue" description="Phosphothreonine; by host" evidence="2">
    <location>
        <position position="182"/>
    </location>
</feature>
<feature type="helix" evidence="7">
    <location>
        <begin position="13"/>
        <end position="47"/>
    </location>
</feature>
<feature type="helix" evidence="7">
    <location>
        <begin position="51"/>
        <end position="58"/>
    </location>
</feature>
<evidence type="ECO:0000250" key="1"/>
<evidence type="ECO:0000250" key="2">
    <source>
        <dbReference type="UniProtKB" id="P0C6L3"/>
    </source>
</evidence>
<evidence type="ECO:0000255" key="3"/>
<evidence type="ECO:0000255" key="4">
    <source>
        <dbReference type="PROSITE-ProRule" id="PRU01183"/>
    </source>
</evidence>
<evidence type="ECO:0000256" key="5">
    <source>
        <dbReference type="SAM" id="MobiDB-lite"/>
    </source>
</evidence>
<evidence type="ECO:0000305" key="6"/>
<evidence type="ECO:0007829" key="7">
    <source>
        <dbReference type="PDB" id="1A92"/>
    </source>
</evidence>